<sequence>MTKSYEMVYILRPDLLEEQVQQEINRYRDFLTENEAQEVQIKYWGKRRLAYPIKKLQDGFYVQMNYQGDGKQIAPLERMMRLSDEVIRYLTIKLDKDQYTPNDSPPPEGIIDTPKPVIEPPKPAVESPKPAETTEETAEAVETVEPPAEPAEPVEAVETVDTTEETVEPVDTTSEE</sequence>
<dbReference type="EMBL" id="CP001291">
    <property type="protein sequence ID" value="ACK73163.1"/>
    <property type="molecule type" value="Genomic_DNA"/>
</dbReference>
<dbReference type="SMR" id="B7KD42"/>
<dbReference type="STRING" id="65393.PCC7424_4806"/>
<dbReference type="KEGG" id="cyc:PCC7424_4806"/>
<dbReference type="eggNOG" id="COG0360">
    <property type="taxonomic scope" value="Bacteria"/>
</dbReference>
<dbReference type="HOGENOM" id="CLU_113441_4_2_3"/>
<dbReference type="OrthoDB" id="9812702at2"/>
<dbReference type="Proteomes" id="UP000002384">
    <property type="component" value="Chromosome"/>
</dbReference>
<dbReference type="GO" id="GO:0005737">
    <property type="term" value="C:cytoplasm"/>
    <property type="evidence" value="ECO:0007669"/>
    <property type="project" value="UniProtKB-ARBA"/>
</dbReference>
<dbReference type="GO" id="GO:1990904">
    <property type="term" value="C:ribonucleoprotein complex"/>
    <property type="evidence" value="ECO:0007669"/>
    <property type="project" value="UniProtKB-KW"/>
</dbReference>
<dbReference type="GO" id="GO:0005840">
    <property type="term" value="C:ribosome"/>
    <property type="evidence" value="ECO:0007669"/>
    <property type="project" value="UniProtKB-KW"/>
</dbReference>
<dbReference type="GO" id="GO:0070181">
    <property type="term" value="F:small ribosomal subunit rRNA binding"/>
    <property type="evidence" value="ECO:0007669"/>
    <property type="project" value="TreeGrafter"/>
</dbReference>
<dbReference type="GO" id="GO:0003735">
    <property type="term" value="F:structural constituent of ribosome"/>
    <property type="evidence" value="ECO:0007669"/>
    <property type="project" value="InterPro"/>
</dbReference>
<dbReference type="GO" id="GO:0006412">
    <property type="term" value="P:translation"/>
    <property type="evidence" value="ECO:0007669"/>
    <property type="project" value="UniProtKB-UniRule"/>
</dbReference>
<dbReference type="CDD" id="cd15487">
    <property type="entry name" value="bS6_chloro_cyano"/>
    <property type="match status" value="1"/>
</dbReference>
<dbReference type="Gene3D" id="3.30.70.60">
    <property type="match status" value="1"/>
</dbReference>
<dbReference type="HAMAP" id="MF_00360">
    <property type="entry name" value="Ribosomal_bS6"/>
    <property type="match status" value="1"/>
</dbReference>
<dbReference type="InterPro" id="IPR000529">
    <property type="entry name" value="Ribosomal_bS6"/>
</dbReference>
<dbReference type="InterPro" id="IPR020815">
    <property type="entry name" value="Ribosomal_bS6_CS"/>
</dbReference>
<dbReference type="InterPro" id="IPR035980">
    <property type="entry name" value="Ribosomal_bS6_sf"/>
</dbReference>
<dbReference type="InterPro" id="IPR020814">
    <property type="entry name" value="Ribosomal_S6_plastid/chlpt"/>
</dbReference>
<dbReference type="InterPro" id="IPR014717">
    <property type="entry name" value="Transl_elong_EF1B/ribsomal_bS6"/>
</dbReference>
<dbReference type="NCBIfam" id="TIGR00166">
    <property type="entry name" value="S6"/>
    <property type="match status" value="1"/>
</dbReference>
<dbReference type="PANTHER" id="PTHR21011">
    <property type="entry name" value="MITOCHONDRIAL 28S RIBOSOMAL PROTEIN S6"/>
    <property type="match status" value="1"/>
</dbReference>
<dbReference type="PANTHER" id="PTHR21011:SF1">
    <property type="entry name" value="SMALL RIBOSOMAL SUBUNIT PROTEIN BS6M"/>
    <property type="match status" value="1"/>
</dbReference>
<dbReference type="Pfam" id="PF01250">
    <property type="entry name" value="Ribosomal_S6"/>
    <property type="match status" value="1"/>
</dbReference>
<dbReference type="SUPFAM" id="SSF54995">
    <property type="entry name" value="Ribosomal protein S6"/>
    <property type="match status" value="1"/>
</dbReference>
<dbReference type="PROSITE" id="PS01048">
    <property type="entry name" value="RIBOSOMAL_S6"/>
    <property type="match status" value="1"/>
</dbReference>
<comment type="function">
    <text evidence="1">Binds together with bS18 to 16S ribosomal RNA.</text>
</comment>
<comment type="similarity">
    <text evidence="1">Belongs to the bacterial ribosomal protein bS6 family.</text>
</comment>
<accession>B7KD42</accession>
<gene>
    <name evidence="1" type="primary">rpsF</name>
    <name evidence="1" type="synonym">rps6</name>
    <name type="ordered locus">PCC7424_4806</name>
</gene>
<reference key="1">
    <citation type="journal article" date="2011" name="MBio">
        <title>Novel metabolic attributes of the genus Cyanothece, comprising a group of unicellular nitrogen-fixing Cyanobacteria.</title>
        <authorList>
            <person name="Bandyopadhyay A."/>
            <person name="Elvitigala T."/>
            <person name="Welsh E."/>
            <person name="Stockel J."/>
            <person name="Liberton M."/>
            <person name="Min H."/>
            <person name="Sherman L.A."/>
            <person name="Pakrasi H.B."/>
        </authorList>
    </citation>
    <scope>NUCLEOTIDE SEQUENCE [LARGE SCALE GENOMIC DNA]</scope>
    <source>
        <strain>PCC 7424</strain>
    </source>
</reference>
<proteinExistence type="inferred from homology"/>
<feature type="chain" id="PRO_1000120734" description="Small ribosomal subunit protein bS6">
    <location>
        <begin position="1"/>
        <end position="176"/>
    </location>
</feature>
<feature type="region of interest" description="Disordered" evidence="2">
    <location>
        <begin position="97"/>
        <end position="176"/>
    </location>
</feature>
<feature type="compositionally biased region" description="Low complexity" evidence="2">
    <location>
        <begin position="140"/>
        <end position="160"/>
    </location>
</feature>
<feature type="compositionally biased region" description="Acidic residues" evidence="2">
    <location>
        <begin position="161"/>
        <end position="176"/>
    </location>
</feature>
<keyword id="KW-1185">Reference proteome</keyword>
<keyword id="KW-0687">Ribonucleoprotein</keyword>
<keyword id="KW-0689">Ribosomal protein</keyword>
<keyword id="KW-0694">RNA-binding</keyword>
<keyword id="KW-0699">rRNA-binding</keyword>
<organism>
    <name type="scientific">Gloeothece citriformis (strain PCC 7424)</name>
    <name type="common">Cyanothece sp. (strain PCC 7424)</name>
    <dbReference type="NCBI Taxonomy" id="65393"/>
    <lineage>
        <taxon>Bacteria</taxon>
        <taxon>Bacillati</taxon>
        <taxon>Cyanobacteriota</taxon>
        <taxon>Cyanophyceae</taxon>
        <taxon>Oscillatoriophycideae</taxon>
        <taxon>Chroococcales</taxon>
        <taxon>Aphanothecaceae</taxon>
        <taxon>Gloeothece</taxon>
        <taxon>Gloeothece citriformis</taxon>
    </lineage>
</organism>
<name>RS6_GLOC7</name>
<evidence type="ECO:0000255" key="1">
    <source>
        <dbReference type="HAMAP-Rule" id="MF_00360"/>
    </source>
</evidence>
<evidence type="ECO:0000256" key="2">
    <source>
        <dbReference type="SAM" id="MobiDB-lite"/>
    </source>
</evidence>
<evidence type="ECO:0000305" key="3"/>
<protein>
    <recommendedName>
        <fullName evidence="1">Small ribosomal subunit protein bS6</fullName>
    </recommendedName>
    <alternativeName>
        <fullName evidence="3">30S ribosomal protein S6</fullName>
    </alternativeName>
</protein>